<dbReference type="EMBL" id="BX571857">
    <property type="protein sequence ID" value="CAG42422.1"/>
    <property type="molecule type" value="Genomic_DNA"/>
</dbReference>
<dbReference type="RefSeq" id="WP_000148828.1">
    <property type="nucleotide sequence ID" value="NC_002953.3"/>
</dbReference>
<dbReference type="SMR" id="Q6GBE9"/>
<dbReference type="KEGG" id="sas:SAS0646"/>
<dbReference type="HOGENOM" id="CLU_106619_0_0_9"/>
<dbReference type="HAMAP" id="MF_00489">
    <property type="entry name" value="UPF0178"/>
    <property type="match status" value="1"/>
</dbReference>
<dbReference type="InterPro" id="IPR003791">
    <property type="entry name" value="UPF0178"/>
</dbReference>
<dbReference type="NCBIfam" id="NF001095">
    <property type="entry name" value="PRK00124.1"/>
    <property type="match status" value="1"/>
</dbReference>
<dbReference type="PANTHER" id="PTHR35146">
    <property type="entry name" value="UPF0178 PROTEIN YAII"/>
    <property type="match status" value="1"/>
</dbReference>
<dbReference type="PANTHER" id="PTHR35146:SF1">
    <property type="entry name" value="UPF0178 PROTEIN YAII"/>
    <property type="match status" value="1"/>
</dbReference>
<dbReference type="Pfam" id="PF02639">
    <property type="entry name" value="DUF188"/>
    <property type="match status" value="1"/>
</dbReference>
<reference key="1">
    <citation type="journal article" date="2004" name="Proc. Natl. Acad. Sci. U.S.A.">
        <title>Complete genomes of two clinical Staphylococcus aureus strains: evidence for the rapid evolution of virulence and drug resistance.</title>
        <authorList>
            <person name="Holden M.T.G."/>
            <person name="Feil E.J."/>
            <person name="Lindsay J.A."/>
            <person name="Peacock S.J."/>
            <person name="Day N.P.J."/>
            <person name="Enright M.C."/>
            <person name="Foster T.J."/>
            <person name="Moore C.E."/>
            <person name="Hurst L."/>
            <person name="Atkin R."/>
            <person name="Barron A."/>
            <person name="Bason N."/>
            <person name="Bentley S.D."/>
            <person name="Chillingworth C."/>
            <person name="Chillingworth T."/>
            <person name="Churcher C."/>
            <person name="Clark L."/>
            <person name="Corton C."/>
            <person name="Cronin A."/>
            <person name="Doggett J."/>
            <person name="Dowd L."/>
            <person name="Feltwell T."/>
            <person name="Hance Z."/>
            <person name="Harris B."/>
            <person name="Hauser H."/>
            <person name="Holroyd S."/>
            <person name="Jagels K."/>
            <person name="James K.D."/>
            <person name="Lennard N."/>
            <person name="Line A."/>
            <person name="Mayes R."/>
            <person name="Moule S."/>
            <person name="Mungall K."/>
            <person name="Ormond D."/>
            <person name="Quail M.A."/>
            <person name="Rabbinowitsch E."/>
            <person name="Rutherford K.M."/>
            <person name="Sanders M."/>
            <person name="Sharp S."/>
            <person name="Simmonds M."/>
            <person name="Stevens K."/>
            <person name="Whitehead S."/>
            <person name="Barrell B.G."/>
            <person name="Spratt B.G."/>
            <person name="Parkhill J."/>
        </authorList>
    </citation>
    <scope>NUCLEOTIDE SEQUENCE [LARGE SCALE GENOMIC DNA]</scope>
    <source>
        <strain>MSSA476</strain>
    </source>
</reference>
<name>Y646_STAAS</name>
<organism>
    <name type="scientific">Staphylococcus aureus (strain MSSA476)</name>
    <dbReference type="NCBI Taxonomy" id="282459"/>
    <lineage>
        <taxon>Bacteria</taxon>
        <taxon>Bacillati</taxon>
        <taxon>Bacillota</taxon>
        <taxon>Bacilli</taxon>
        <taxon>Bacillales</taxon>
        <taxon>Staphylococcaceae</taxon>
        <taxon>Staphylococcus</taxon>
    </lineage>
</organism>
<accession>Q6GBE9</accession>
<feature type="chain" id="PRO_0000176010" description="UPF0178 protein SAS0646">
    <location>
        <begin position="1"/>
        <end position="152"/>
    </location>
</feature>
<evidence type="ECO:0000255" key="1">
    <source>
        <dbReference type="HAMAP-Rule" id="MF_00489"/>
    </source>
</evidence>
<protein>
    <recommendedName>
        <fullName evidence="1">UPF0178 protein SAS0646</fullName>
    </recommendedName>
</protein>
<sequence length="152" mass="17258">MTHIIIDGDACPVVDSIIDLTTETGIFVTIIRSFSHFSNQLYPPHVSTLYVDDGPDAVDYKIVQLSTKDDIVVTQDYGLASLLVDKVLIVMHHNGKIYNSKNIQQLLDKRYMNAQIRKQGGRHKGPPPFTKQDQKVFEQSLLKVIHRIKELD</sequence>
<comment type="similarity">
    <text evidence="1">Belongs to the UPF0178 family.</text>
</comment>
<gene>
    <name type="ordered locus">SAS0646</name>
</gene>
<proteinExistence type="inferred from homology"/>